<protein>
    <recommendedName>
        <fullName evidence="1">Small ribosomal subunit protein bS21</fullName>
    </recommendedName>
    <alternativeName>
        <fullName evidence="3">30S ribosomal protein S21</fullName>
    </alternativeName>
</protein>
<accession>B2V2J3</accession>
<reference key="1">
    <citation type="submission" date="2008-05" db="EMBL/GenBank/DDBJ databases">
        <title>Complete genome sequence of Clostridium botulinum E3 str. Alaska E43.</title>
        <authorList>
            <person name="Brinkac L.M."/>
            <person name="Brown J.L."/>
            <person name="Bruce D."/>
            <person name="Detter C."/>
            <person name="Munk C."/>
            <person name="Smith L.A."/>
            <person name="Smith T.J."/>
            <person name="Sutton G."/>
            <person name="Brettin T.S."/>
        </authorList>
    </citation>
    <scope>NUCLEOTIDE SEQUENCE [LARGE SCALE GENOMIC DNA]</scope>
    <source>
        <strain>Alaska E43 / Type E3</strain>
    </source>
</reference>
<gene>
    <name evidence="1" type="primary">rpsU</name>
    <name type="ordered locus">CLH_0866</name>
</gene>
<organism>
    <name type="scientific">Clostridium botulinum (strain Alaska E43 / Type E3)</name>
    <dbReference type="NCBI Taxonomy" id="508767"/>
    <lineage>
        <taxon>Bacteria</taxon>
        <taxon>Bacillati</taxon>
        <taxon>Bacillota</taxon>
        <taxon>Clostridia</taxon>
        <taxon>Eubacteriales</taxon>
        <taxon>Clostridiaceae</taxon>
        <taxon>Clostridium</taxon>
    </lineage>
</organism>
<sequence length="58" mass="6834">MSEIKVGENETLESALRRFKKKCARAGVLSEVRKREHYEKPSVKKKKKSEAARKRKFK</sequence>
<keyword id="KW-0687">Ribonucleoprotein</keyword>
<keyword id="KW-0689">Ribosomal protein</keyword>
<name>RS21_CLOBA</name>
<proteinExistence type="inferred from homology"/>
<dbReference type="EMBL" id="CP001078">
    <property type="protein sequence ID" value="ACD53637.1"/>
    <property type="molecule type" value="Genomic_DNA"/>
</dbReference>
<dbReference type="RefSeq" id="WP_003371500.1">
    <property type="nucleotide sequence ID" value="NC_010723.1"/>
</dbReference>
<dbReference type="SMR" id="B2V2J3"/>
<dbReference type="KEGG" id="cbt:CLH_0866"/>
<dbReference type="HOGENOM" id="CLU_159258_1_2_9"/>
<dbReference type="GO" id="GO:1990904">
    <property type="term" value="C:ribonucleoprotein complex"/>
    <property type="evidence" value="ECO:0007669"/>
    <property type="project" value="UniProtKB-KW"/>
</dbReference>
<dbReference type="GO" id="GO:0005840">
    <property type="term" value="C:ribosome"/>
    <property type="evidence" value="ECO:0007669"/>
    <property type="project" value="UniProtKB-KW"/>
</dbReference>
<dbReference type="GO" id="GO:0003735">
    <property type="term" value="F:structural constituent of ribosome"/>
    <property type="evidence" value="ECO:0007669"/>
    <property type="project" value="InterPro"/>
</dbReference>
<dbReference type="GO" id="GO:0006412">
    <property type="term" value="P:translation"/>
    <property type="evidence" value="ECO:0007669"/>
    <property type="project" value="UniProtKB-UniRule"/>
</dbReference>
<dbReference type="Gene3D" id="1.20.5.1150">
    <property type="entry name" value="Ribosomal protein S8"/>
    <property type="match status" value="1"/>
</dbReference>
<dbReference type="HAMAP" id="MF_00358">
    <property type="entry name" value="Ribosomal_bS21"/>
    <property type="match status" value="1"/>
</dbReference>
<dbReference type="InterPro" id="IPR001911">
    <property type="entry name" value="Ribosomal_bS21"/>
</dbReference>
<dbReference type="InterPro" id="IPR018278">
    <property type="entry name" value="Ribosomal_bS21_CS"/>
</dbReference>
<dbReference type="InterPro" id="IPR038380">
    <property type="entry name" value="Ribosomal_bS21_sf"/>
</dbReference>
<dbReference type="NCBIfam" id="TIGR00030">
    <property type="entry name" value="S21p"/>
    <property type="match status" value="1"/>
</dbReference>
<dbReference type="PANTHER" id="PTHR21109">
    <property type="entry name" value="MITOCHONDRIAL 28S RIBOSOMAL PROTEIN S21"/>
    <property type="match status" value="1"/>
</dbReference>
<dbReference type="PANTHER" id="PTHR21109:SF22">
    <property type="entry name" value="SMALL RIBOSOMAL SUBUNIT PROTEIN BS21"/>
    <property type="match status" value="1"/>
</dbReference>
<dbReference type="Pfam" id="PF01165">
    <property type="entry name" value="Ribosomal_S21"/>
    <property type="match status" value="1"/>
</dbReference>
<dbReference type="PRINTS" id="PR00976">
    <property type="entry name" value="RIBOSOMALS21"/>
</dbReference>
<dbReference type="PROSITE" id="PS01181">
    <property type="entry name" value="RIBOSOMAL_S21"/>
    <property type="match status" value="1"/>
</dbReference>
<evidence type="ECO:0000255" key="1">
    <source>
        <dbReference type="HAMAP-Rule" id="MF_00358"/>
    </source>
</evidence>
<evidence type="ECO:0000256" key="2">
    <source>
        <dbReference type="SAM" id="MobiDB-lite"/>
    </source>
</evidence>
<evidence type="ECO:0000305" key="3"/>
<comment type="similarity">
    <text evidence="1">Belongs to the bacterial ribosomal protein bS21 family.</text>
</comment>
<feature type="chain" id="PRO_1000120602" description="Small ribosomal subunit protein bS21">
    <location>
        <begin position="1"/>
        <end position="58"/>
    </location>
</feature>
<feature type="region of interest" description="Disordered" evidence="2">
    <location>
        <begin position="35"/>
        <end position="58"/>
    </location>
</feature>
<feature type="compositionally biased region" description="Basic residues" evidence="2">
    <location>
        <begin position="43"/>
        <end position="58"/>
    </location>
</feature>